<comment type="function">
    <text evidence="1">Capsid protein self-assembles to form an icosahedral capsid with a T=1 symmetry, about 22 nm in diameter, and consisting of 60 copies of two size variants of the capsid proteins, VP1 and VP2, which differ by the presence of an N-terminal extension in the minor protein VP1. The capsid encapsulates the genomic ssDNA. Capsid proteins are responsible for the attachment to host cell receptors. This attachment induces virion internalization predominantly through clathrin-dependent endocytosis. Binding to the host receptors also induces capsid rearrangements leading to surface exposure of VP1 N-terminus, specifically its phospholipase A2-like region and putative nuclear localization signal(s). VP1 N-terminus might serve as a lipolytic enzyme to breach the endosomal membrane during entry into host cell and might contribute to virus transport to the nucleus (By similarity).</text>
</comment>
<comment type="subcellular location">
    <subcellularLocation>
        <location evidence="1">Virion</location>
    </subcellularLocation>
    <subcellularLocation>
        <location evidence="4">Host nucleus</location>
    </subcellularLocation>
</comment>
<comment type="alternative products">
    <event type="alternative splicing"/>
    <isoform>
        <id>P18546-1</id>
        <name>VP1</name>
        <sequence type="displayed"/>
    </isoform>
    <isoform>
        <id>P18546-2</id>
        <name>VP2</name>
        <sequence type="described" ref="VSP_041144"/>
    </isoform>
</comment>
<comment type="domain">
    <text>The N-terminus of VP1 is sequestered within the mature capsid. It contains a phospholipase A2-like region and putative nuclear localization signals.</text>
</comment>
<comment type="miscellaneous">
    <text>VP3 might be a post-translational cleavage product of VP2 in several autonomous parvoviruses.</text>
</comment>
<comment type="miscellaneous">
    <molecule>Isoform VP1</molecule>
    <text>Minor splicing isoform.</text>
</comment>
<comment type="miscellaneous">
    <molecule>Isoform VP2</molecule>
    <text evidence="4">Major splicing isoform produced by deletion of the initiating AUG for VP1 and downstream translation of VP2.</text>
</comment>
<comment type="similarity">
    <text evidence="4">Belongs to the parvoviridae capsid protein family.</text>
</comment>
<comment type="online information" name="Virus Particle ExploreR db">
    <link uri="https://viperdb.org/Info_Page.php?VDB=1k3v"/>
    <text>Icosahedral capsid structure</text>
</comment>
<protein>
    <recommendedName>
        <fullName>Capsid protein VP1</fullName>
    </recommendedName>
    <alternativeName>
        <fullName>Coat protein VP1</fullName>
    </alternativeName>
</protein>
<organismHost>
    <name type="scientific">Sus scrofa</name>
    <name type="common">Pig</name>
    <dbReference type="NCBI Taxonomy" id="9823"/>
</organismHost>
<sequence>MAPPAKRARGLTLPGYKYLGPGNSLDQGEPTNPSDAAAKEHDEAYDKYIKSGKNPYFYFSAADEKFIKETEHAKDYGGKIGHYFFRAKRAFAPKLSETDSPTTSQQPEVRRSPRKHPGSKPPGKRPAPRHIFINLAKKKAKGTSNTNSNSMSENVEQHNPINAGTELSATGNESGGGGGGGGGRGAGGVGVSTGTFNNQTEFQYLGEGLVRITAHASRLIHLNMPEHETYKRIHVLNSESGVAGQMVQDDAHTQMVTPWSLIDANAWGVWFNPADWQLISNNMTEINLVSFEQEIFNVVLKTITESATSPPTKIYNNDLTASLMVALDTNNTLPYTPAAPRSETLGFYPWLPTKPTQYRYYLSCIRNLNPPTYTGQSQQITDSIQTGLHSDIMFYTIENAVPIHLLRTGDEFSTGIYHFDTKPLKLTHSWQTNRSLGLPPKLLTEPTTEGDQHPGTLPAANTRKGYHQTINNSYTEATAIRPAQVGYNTPYMNFEYSNGGPFLTPIVPTADTQYNDDEPNGAIRFTMDYQHGHLTTSSQELERYTFNPQSKCGRAPKQQFNQQAPLNLENTNNGTLLPSDPIGGKSNMHFMNTLNTYGPLTALNNTAPVFPNGQIWDKELDTDLKPRLHVTAPFVCKNNPPGQLFVKIAPNLTDDFNADSPQQPRIITYSNFWWKGTLTFTAKMRSSNMWNPIQQHTTTAENIGNYIPTNIGGIRMFPEYSQLIPRKLY</sequence>
<name>CAPSD_PAVPN</name>
<proteinExistence type="evidence at protein level"/>
<keyword id="KW-0002">3D-structure</keyword>
<keyword id="KW-0025">Alternative splicing</keyword>
<keyword id="KW-0167">Capsid protein</keyword>
<keyword id="KW-1165">Clathrin-mediated endocytosis of virus by host</keyword>
<keyword id="KW-1176">Cytoplasmic inwards viral transport</keyword>
<keyword id="KW-1048">Host nucleus</keyword>
<keyword id="KW-0945">Host-virus interaction</keyword>
<keyword id="KW-0460">Magnesium</keyword>
<keyword id="KW-0479">Metal-binding</keyword>
<keyword id="KW-1177">Microtubular inwards viral transport</keyword>
<keyword id="KW-1140">T=1 icosahedral capsid protein</keyword>
<keyword id="KW-1161">Viral attachment to host cell</keyword>
<keyword id="KW-1162">Viral penetration into host cytoplasm</keyword>
<keyword id="KW-1163">Viral penetration into host nucleus</keyword>
<keyword id="KW-1173">Viral penetration via permeabilization of host membrane</keyword>
<keyword id="KW-0946">Virion</keyword>
<keyword id="KW-1164">Virus endocytosis by host</keyword>
<keyword id="KW-1160">Virus entry into host cell</keyword>
<organism>
    <name type="scientific">Porcine parvovirus (strain NADL-2)</name>
    <name type="common">PPV</name>
    <dbReference type="NCBI Taxonomy" id="10797"/>
    <lineage>
        <taxon>Viruses</taxon>
        <taxon>Monodnaviria</taxon>
        <taxon>Shotokuvirae</taxon>
        <taxon>Cossaviricota</taxon>
        <taxon>Quintoviricetes</taxon>
        <taxon>Piccovirales</taxon>
        <taxon>Parvoviridae</taxon>
        <taxon>Parvovirinae</taxon>
        <taxon>Protoparvovirus</taxon>
        <taxon>Protoparvovirus ungulate1</taxon>
    </lineage>
</organism>
<accession>P18546</accession>
<accession>P22964</accession>
<accession>Q89816</accession>
<evidence type="ECO:0000250" key="1"/>
<evidence type="ECO:0000255" key="2"/>
<evidence type="ECO:0000256" key="3">
    <source>
        <dbReference type="SAM" id="MobiDB-lite"/>
    </source>
</evidence>
<evidence type="ECO:0000305" key="4"/>
<evidence type="ECO:0007829" key="5">
    <source>
        <dbReference type="PDB" id="1K3V"/>
    </source>
</evidence>
<feature type="chain" id="PRO_0000039437" description="Capsid protein VP1">
    <location>
        <begin position="1"/>
        <end position="729"/>
    </location>
</feature>
<feature type="region of interest" description="Disordered" evidence="3">
    <location>
        <begin position="1"/>
        <end position="37"/>
    </location>
</feature>
<feature type="region of interest" description="Phospholipase A2-like" evidence="1">
    <location>
        <begin position="18"/>
        <end position="63"/>
    </location>
</feature>
<feature type="region of interest" description="Disordered" evidence="3">
    <location>
        <begin position="94"/>
        <end position="129"/>
    </location>
</feature>
<feature type="region of interest" description="Disordered" evidence="3">
    <location>
        <begin position="163"/>
        <end position="186"/>
    </location>
</feature>
<feature type="region of interest" description="Disordered" evidence="3">
    <location>
        <begin position="437"/>
        <end position="465"/>
    </location>
</feature>
<feature type="short sequence motif" description="Nuclear localization signal" evidence="2">
    <location>
        <begin position="4"/>
        <end position="12"/>
    </location>
</feature>
<feature type="compositionally biased region" description="Polar residues" evidence="3">
    <location>
        <begin position="24"/>
        <end position="34"/>
    </location>
</feature>
<feature type="compositionally biased region" description="Polar residues" evidence="3">
    <location>
        <begin position="98"/>
        <end position="107"/>
    </location>
</feature>
<feature type="compositionally biased region" description="Basic residues" evidence="3">
    <location>
        <begin position="112"/>
        <end position="128"/>
    </location>
</feature>
<feature type="compositionally biased region" description="Polar residues" evidence="3">
    <location>
        <begin position="163"/>
        <end position="172"/>
    </location>
</feature>
<feature type="compositionally biased region" description="Gly residues" evidence="3">
    <location>
        <begin position="173"/>
        <end position="186"/>
    </location>
</feature>
<feature type="binding site" evidence="1">
    <location>
        <position position="330"/>
    </location>
    <ligand>
        <name>Mg(2+)</name>
        <dbReference type="ChEBI" id="CHEBI:18420"/>
        <label>1</label>
    </ligand>
</feature>
<feature type="splice variant" id="VSP_041144" description="In isoform VP2." evidence="4">
    <location>
        <begin position="1"/>
        <end position="150"/>
    </location>
</feature>
<feature type="sequence conflict" description="In Ref. 3; BAA00502." evidence="4" ref="3">
    <original>G</original>
    <variation>GKGSFKGVVAYILQIIFLYITG</variation>
    <location>
        <position position="10"/>
    </location>
</feature>
<feature type="sequence conflict" description="In Ref. 3; BAA00502." evidence="4" ref="3">
    <original>YKY</original>
    <variation>TI</variation>
    <location>
        <begin position="16"/>
        <end position="18"/>
    </location>
</feature>
<feature type="sequence conflict" description="In Ref. 3; BAA00502." evidence="4" ref="3">
    <original>Y</original>
    <variation>T</variation>
    <location>
        <position position="56"/>
    </location>
</feature>
<feature type="sequence conflict" description="In Ref. 3; BAA00502." evidence="4" ref="3">
    <original>T</original>
    <variation>S</variation>
    <location>
        <position position="195"/>
    </location>
</feature>
<feature type="sequence conflict" description="In Ref. 3; BAA00502." evidence="4" ref="3">
    <original>V</original>
    <variation>S</variation>
    <location>
        <position position="242"/>
    </location>
</feature>
<feature type="sequence conflict" description="In Ref. 3; BAA00502." evidence="4" ref="3">
    <original>E</original>
    <variation>A</variation>
    <location>
        <position position="294"/>
    </location>
</feature>
<feature type="sequence conflict" description="In Ref. 3; BAA00502." evidence="4" ref="3">
    <original>N</original>
    <variation>K</variation>
    <location>
        <position position="705"/>
    </location>
</feature>
<feature type="sequence conflict" description="In Ref. 3; BAA00502." evidence="4" ref="3">
    <original>R</original>
    <variation>K</variation>
    <location>
        <position position="715"/>
    </location>
</feature>
<feature type="strand" evidence="5">
    <location>
        <begin position="200"/>
        <end position="205"/>
    </location>
</feature>
<feature type="helix" evidence="5">
    <location>
        <begin position="206"/>
        <end position="208"/>
    </location>
</feature>
<feature type="strand" evidence="5">
    <location>
        <begin position="209"/>
        <end position="223"/>
    </location>
</feature>
<feature type="strand" evidence="5">
    <location>
        <begin position="231"/>
        <end position="235"/>
    </location>
</feature>
<feature type="helix" evidence="5">
    <location>
        <begin position="238"/>
        <end position="241"/>
    </location>
</feature>
<feature type="strand" evidence="5">
    <location>
        <begin position="242"/>
        <end position="244"/>
    </location>
</feature>
<feature type="helix" evidence="5">
    <location>
        <begin position="245"/>
        <end position="248"/>
    </location>
</feature>
<feature type="strand" evidence="5">
    <location>
        <begin position="252"/>
        <end position="261"/>
    </location>
</feature>
<feature type="helix" evidence="5">
    <location>
        <begin position="267"/>
        <end position="270"/>
    </location>
</feature>
<feature type="helix" evidence="5">
    <location>
        <begin position="273"/>
        <end position="282"/>
    </location>
</feature>
<feature type="strand" evidence="5">
    <location>
        <begin position="283"/>
        <end position="292"/>
    </location>
</feature>
<feature type="strand" evidence="5">
    <location>
        <begin position="294"/>
        <end position="306"/>
    </location>
</feature>
<feature type="strand" evidence="5">
    <location>
        <begin position="308"/>
        <end position="310"/>
    </location>
</feature>
<feature type="strand" evidence="5">
    <location>
        <begin position="312"/>
        <end position="317"/>
    </location>
</feature>
<feature type="strand" evidence="5">
    <location>
        <begin position="323"/>
        <end position="328"/>
    </location>
</feature>
<feature type="helix" evidence="5">
    <location>
        <begin position="339"/>
        <end position="341"/>
    </location>
</feature>
<feature type="strand" evidence="5">
    <location>
        <begin position="356"/>
        <end position="361"/>
    </location>
</feature>
<feature type="helix" evidence="5">
    <location>
        <begin position="389"/>
        <end position="391"/>
    </location>
</feature>
<feature type="helix" evidence="5">
    <location>
        <begin position="397"/>
        <end position="400"/>
    </location>
</feature>
<feature type="strand" evidence="5">
    <location>
        <begin position="403"/>
        <end position="406"/>
    </location>
</feature>
<feature type="helix" evidence="5">
    <location>
        <begin position="433"/>
        <end position="435"/>
    </location>
</feature>
<feature type="strand" evidence="5">
    <location>
        <begin position="447"/>
        <end position="450"/>
    </location>
</feature>
<feature type="strand" evidence="5">
    <location>
        <begin position="468"/>
        <end position="472"/>
    </location>
</feature>
<feature type="strand" evidence="5">
    <location>
        <begin position="482"/>
        <end position="486"/>
    </location>
</feature>
<feature type="strand" evidence="5">
    <location>
        <begin position="494"/>
        <end position="497"/>
    </location>
</feature>
<feature type="strand" evidence="5">
    <location>
        <begin position="500"/>
        <end position="503"/>
    </location>
</feature>
<feature type="helix" evidence="5">
    <location>
        <begin position="518"/>
        <end position="520"/>
    </location>
</feature>
<feature type="strand" evidence="5">
    <location>
        <begin position="531"/>
        <end position="533"/>
    </location>
</feature>
<feature type="turn" evidence="5">
    <location>
        <begin position="556"/>
        <end position="558"/>
    </location>
</feature>
<feature type="helix" evidence="5">
    <location>
        <begin position="590"/>
        <end position="592"/>
    </location>
</feature>
<feature type="strand" evidence="5">
    <location>
        <begin position="622"/>
        <end position="624"/>
    </location>
</feature>
<feature type="strand" evidence="5">
    <location>
        <begin position="633"/>
        <end position="635"/>
    </location>
</feature>
<feature type="strand" evidence="5">
    <location>
        <begin position="643"/>
        <end position="648"/>
    </location>
</feature>
<feature type="strand" evidence="5">
    <location>
        <begin position="658"/>
        <end position="662"/>
    </location>
</feature>
<feature type="strand" evidence="5">
    <location>
        <begin position="668"/>
        <end position="684"/>
    </location>
</feature>
<feature type="strand" evidence="5">
    <location>
        <begin position="689"/>
        <end position="691"/>
    </location>
</feature>
<feature type="turn" evidence="5">
    <location>
        <begin position="700"/>
        <end position="702"/>
    </location>
</feature>
<feature type="helix" evidence="5">
    <location>
        <begin position="703"/>
        <end position="706"/>
    </location>
</feature>
<dbReference type="EMBL" id="M32787">
    <property type="protein sequence ID" value="AAA46917.1"/>
    <property type="molecule type" value="Genomic_DNA"/>
</dbReference>
<dbReference type="EMBL" id="M32787">
    <property type="protein sequence ID" value="AAA46918.1"/>
    <property type="molecule type" value="Genomic_DNA"/>
</dbReference>
<dbReference type="EMBL" id="M38367">
    <property type="protein sequence ID" value="AAA46919.1"/>
    <property type="molecule type" value="Genomic_DNA"/>
</dbReference>
<dbReference type="EMBL" id="M38367">
    <property type="protein sequence ID" value="AAA46921.1"/>
    <property type="molecule type" value="Genomic_DNA"/>
</dbReference>
<dbReference type="EMBL" id="D00623">
    <property type="protein sequence ID" value="BAA00502.1"/>
    <property type="molecule type" value="Genomic_DNA"/>
</dbReference>
<dbReference type="EMBL" id="L23427">
    <property type="status" value="NOT_ANNOTATED_CDS"/>
    <property type="molecule type" value="Unassigned_DNA"/>
</dbReference>
<dbReference type="PIR" id="B33302">
    <property type="entry name" value="VCPVPP"/>
</dbReference>
<dbReference type="PIR" id="B33743">
    <property type="entry name" value="VCPVNA"/>
</dbReference>
<dbReference type="RefSeq" id="NP_757371.1">
    <property type="nucleotide sequence ID" value="NC_001718.1"/>
</dbReference>
<dbReference type="RefSeq" id="NP_757372.1">
    <property type="nucleotide sequence ID" value="NC_001718.1"/>
</dbReference>
<dbReference type="PDB" id="1K3V">
    <property type="method" value="X-ray"/>
    <property type="resolution" value="3.50 A"/>
    <property type="chains" value="A=151-729"/>
</dbReference>
<dbReference type="PDBsum" id="1K3V"/>
<dbReference type="SMR" id="P18546"/>
<dbReference type="GeneID" id="1489595"/>
<dbReference type="KEGG" id="vg:1489595"/>
<dbReference type="EvolutionaryTrace" id="P18546"/>
<dbReference type="Proteomes" id="UP000008155">
    <property type="component" value="Genome"/>
</dbReference>
<dbReference type="GO" id="GO:0043657">
    <property type="term" value="C:host cell"/>
    <property type="evidence" value="ECO:0007669"/>
    <property type="project" value="GOC"/>
</dbReference>
<dbReference type="GO" id="GO:0042025">
    <property type="term" value="C:host cell nucleus"/>
    <property type="evidence" value="ECO:0007669"/>
    <property type="project" value="UniProtKB-SubCell"/>
</dbReference>
<dbReference type="GO" id="GO:0039615">
    <property type="term" value="C:T=1 icosahedral viral capsid"/>
    <property type="evidence" value="ECO:0007669"/>
    <property type="project" value="UniProtKB-KW"/>
</dbReference>
<dbReference type="GO" id="GO:0046872">
    <property type="term" value="F:metal ion binding"/>
    <property type="evidence" value="ECO:0007669"/>
    <property type="project" value="UniProtKB-KW"/>
</dbReference>
<dbReference type="GO" id="GO:0005198">
    <property type="term" value="F:structural molecule activity"/>
    <property type="evidence" value="ECO:0007669"/>
    <property type="project" value="InterPro"/>
</dbReference>
<dbReference type="GO" id="GO:0075512">
    <property type="term" value="P:clathrin-dependent endocytosis of virus by host cell"/>
    <property type="evidence" value="ECO:0007669"/>
    <property type="project" value="UniProtKB-KW"/>
</dbReference>
<dbReference type="GO" id="GO:0075521">
    <property type="term" value="P:microtubule-dependent intracellular transport of viral material towards nucleus"/>
    <property type="evidence" value="ECO:0007669"/>
    <property type="project" value="UniProtKB-KW"/>
</dbReference>
<dbReference type="GO" id="GO:0140267">
    <property type="term" value="P:symbiont entry into host cell via permeabilization of host membrane"/>
    <property type="evidence" value="ECO:0007669"/>
    <property type="project" value="UniProtKB-KW"/>
</dbReference>
<dbReference type="GO" id="GO:0075732">
    <property type="term" value="P:viral penetration into host nucleus"/>
    <property type="evidence" value="ECO:0007669"/>
    <property type="project" value="UniProtKB-KW"/>
</dbReference>
<dbReference type="GO" id="GO:0019062">
    <property type="term" value="P:virion attachment to host cell"/>
    <property type="evidence" value="ECO:0007669"/>
    <property type="project" value="UniProtKB-KW"/>
</dbReference>
<dbReference type="Gene3D" id="2.170.30.10">
    <property type="entry name" value="Parvovirus coat protein VP1/VP2"/>
    <property type="match status" value="1"/>
</dbReference>
<dbReference type="InterPro" id="IPR016184">
    <property type="entry name" value="Capsid/spike_ssDNA_virus"/>
</dbReference>
<dbReference type="InterPro" id="IPR001403">
    <property type="entry name" value="Parvovirus_coat"/>
</dbReference>
<dbReference type="InterPro" id="IPR013607">
    <property type="entry name" value="Phospholipase_A2-like"/>
</dbReference>
<dbReference type="InterPro" id="IPR036952">
    <property type="entry name" value="VP1/VP2"/>
</dbReference>
<dbReference type="Pfam" id="PF00740">
    <property type="entry name" value="Parvo_coat"/>
    <property type="match status" value="1"/>
</dbReference>
<dbReference type="Pfam" id="PF08398">
    <property type="entry name" value="Phospholip_A2_4"/>
    <property type="match status" value="1"/>
</dbReference>
<dbReference type="SUPFAM" id="SSF88645">
    <property type="entry name" value="ssDNA viruses"/>
    <property type="match status" value="1"/>
</dbReference>
<reference key="1">
    <citation type="journal article" date="1989" name="Virology">
        <title>Nucleotide sequence analysis of the capsid genes and the right-hand terminal palindrome of porcine parvovirus, strain NADL-2.</title>
        <authorList>
            <person name="Vasudevacharya J."/>
            <person name="Basak S."/>
            <person name="Srinivas R.V."/>
            <person name="Compans R.W."/>
        </authorList>
    </citation>
    <scope>NUCLEOTIDE SEQUENCE [GENOMIC DNA]</scope>
</reference>
<reference key="2">
    <citation type="journal article" date="1990" name="Virology">
        <title>The complete nucleotide sequence of an infectious clone of porcine parvovirus, strain NADL-2.</title>
        <authorList>
            <person name="Vasudevacharya J."/>
            <person name="Basak S."/>
            <person name="Srinivas R.V."/>
            <person name="Compans R.W."/>
        </authorList>
    </citation>
    <scope>NUCLEOTIDE SEQUENCE [GENOMIC DNA]</scope>
</reference>
<reference key="3">
    <citation type="journal article" date="1989" name="J. Gen. Virol.">
        <title>Porcine parvovirus: DNA sequence and genome organization.</title>
        <authorList>
            <person name="Ranz A.I."/>
            <person name="Manclus J.J."/>
            <person name="Diaz-Aroca E."/>
            <person name="Casal J.I."/>
        </authorList>
    </citation>
    <scope>NUCLEOTIDE SEQUENCE [GENOMIC DNA]</scope>
</reference>
<reference key="4">
    <citation type="journal article" date="1993" name="Virology">
        <title>Genomic organization and mapping of transcription and translation products of the NADL-2 strain of porcine parvovirus.</title>
        <authorList>
            <person name="Bergeron J."/>
            <person name="Menezes J."/>
            <person name="Tijssen P."/>
        </authorList>
    </citation>
    <scope>NUCLEOTIDE SEQUENCE</scope>
</reference>
<reference key="5">
    <citation type="journal article" date="2002" name="J. Mol. Biol.">
        <title>The structure of porcine parvovirus: comparison with related viruses.</title>
        <authorList>
            <person name="Simpson A.A."/>
            <person name="Hebert B."/>
            <person name="Sullivan G.M."/>
            <person name="Parrish C.R."/>
            <person name="Zadori Z."/>
            <person name="Tijssen P."/>
            <person name="Rossmann M.G."/>
        </authorList>
    </citation>
    <scope>X-RAY CRYSTALLOGRAPHY (3.5 ANGSTROMS) OF 151-729</scope>
</reference>